<evidence type="ECO:0000250" key="1"/>
<evidence type="ECO:0000255" key="2"/>
<evidence type="ECO:0000255" key="3">
    <source>
        <dbReference type="PROSITE-ProRule" id="PRU01058"/>
    </source>
</evidence>
<evidence type="ECO:0000256" key="4">
    <source>
        <dbReference type="SAM" id="MobiDB-lite"/>
    </source>
</evidence>
<accession>C4YPB0</accession>
<keyword id="KW-0496">Mitochondrion</keyword>
<keyword id="KW-0809">Transit peptide</keyword>
<reference key="1">
    <citation type="journal article" date="2009" name="Nature">
        <title>Evolution of pathogenicity and sexual reproduction in eight Candida genomes.</title>
        <authorList>
            <person name="Butler G."/>
            <person name="Rasmussen M.D."/>
            <person name="Lin M.F."/>
            <person name="Santos M.A.S."/>
            <person name="Sakthikumar S."/>
            <person name="Munro C.A."/>
            <person name="Rheinbay E."/>
            <person name="Grabherr M."/>
            <person name="Forche A."/>
            <person name="Reedy J.L."/>
            <person name="Agrafioti I."/>
            <person name="Arnaud M.B."/>
            <person name="Bates S."/>
            <person name="Brown A.J.P."/>
            <person name="Brunke S."/>
            <person name="Costanzo M.C."/>
            <person name="Fitzpatrick D.A."/>
            <person name="de Groot P.W.J."/>
            <person name="Harris D."/>
            <person name="Hoyer L.L."/>
            <person name="Hube B."/>
            <person name="Klis F.M."/>
            <person name="Kodira C."/>
            <person name="Lennard N."/>
            <person name="Logue M.E."/>
            <person name="Martin R."/>
            <person name="Neiman A.M."/>
            <person name="Nikolaou E."/>
            <person name="Quail M.A."/>
            <person name="Quinn J."/>
            <person name="Santos M.C."/>
            <person name="Schmitzberger F.F."/>
            <person name="Sherlock G."/>
            <person name="Shah P."/>
            <person name="Silverstein K.A.T."/>
            <person name="Skrzypek M.S."/>
            <person name="Soll D."/>
            <person name="Staggs R."/>
            <person name="Stansfield I."/>
            <person name="Stumpf M.P.H."/>
            <person name="Sudbery P.E."/>
            <person name="Srikantha T."/>
            <person name="Zeng Q."/>
            <person name="Berman J."/>
            <person name="Berriman M."/>
            <person name="Heitman J."/>
            <person name="Gow N.A.R."/>
            <person name="Lorenz M.C."/>
            <person name="Birren B.W."/>
            <person name="Kellis M."/>
            <person name="Cuomo C.A."/>
        </authorList>
    </citation>
    <scope>NUCLEOTIDE SEQUENCE [LARGE SCALE GENOMIC DNA]</scope>
    <source>
        <strain>WO-1</strain>
    </source>
</reference>
<comment type="function">
    <text evidence="1">May be involved in the mitochondrial lipid metabolism.</text>
</comment>
<comment type="subcellular location">
    <subcellularLocation>
        <location evidence="1">Mitochondrion</location>
    </subcellularLocation>
</comment>
<comment type="similarity">
    <text evidence="3">Belongs to the TRAFAC class YlqF/YawG GTPase family. GEP3 subfamily.</text>
</comment>
<name>GEP3_CANAW</name>
<dbReference type="EMBL" id="CM000310">
    <property type="protein sequence ID" value="EEQ44769.1"/>
    <property type="molecule type" value="Genomic_DNA"/>
</dbReference>
<dbReference type="SMR" id="C4YPB0"/>
<dbReference type="PaxDb" id="5476-C4YPB0"/>
<dbReference type="VEuPathDB" id="FungiDB:CAWG_03061"/>
<dbReference type="HOGENOM" id="CLU_025792_0_0_1"/>
<dbReference type="OMA" id="IIPPFYG"/>
<dbReference type="OrthoDB" id="17848at766764"/>
<dbReference type="Proteomes" id="UP000001429">
    <property type="component" value="Chromosome 3"/>
</dbReference>
<dbReference type="GO" id="GO:0005739">
    <property type="term" value="C:mitochondrion"/>
    <property type="evidence" value="ECO:0007669"/>
    <property type="project" value="UniProtKB-SubCell"/>
</dbReference>
<dbReference type="GO" id="GO:0005525">
    <property type="term" value="F:GTP binding"/>
    <property type="evidence" value="ECO:0007669"/>
    <property type="project" value="InterPro"/>
</dbReference>
<dbReference type="Gene3D" id="3.40.50.300">
    <property type="entry name" value="P-loop containing nucleotide triphosphate hydrolases"/>
    <property type="match status" value="1"/>
</dbReference>
<dbReference type="InterPro" id="IPR030378">
    <property type="entry name" value="G_CP_dom"/>
</dbReference>
<dbReference type="InterPro" id="IPR050896">
    <property type="entry name" value="Mito_lipid_metab_GTPase"/>
</dbReference>
<dbReference type="InterPro" id="IPR027417">
    <property type="entry name" value="P-loop_NTPase"/>
</dbReference>
<dbReference type="PANTHER" id="PTHR46434">
    <property type="entry name" value="GENETIC INTERACTOR OF PROHIBITINS 3, MITOCHONDRIAL"/>
    <property type="match status" value="1"/>
</dbReference>
<dbReference type="PANTHER" id="PTHR46434:SF1">
    <property type="entry name" value="GENETIC INTERACTOR OF PROHIBITINS 3, MITOCHONDRIAL"/>
    <property type="match status" value="1"/>
</dbReference>
<dbReference type="SUPFAM" id="SSF52540">
    <property type="entry name" value="P-loop containing nucleoside triphosphate hydrolases"/>
    <property type="match status" value="1"/>
</dbReference>
<dbReference type="PROSITE" id="PS51721">
    <property type="entry name" value="G_CP"/>
    <property type="match status" value="1"/>
</dbReference>
<feature type="transit peptide" description="Mitochondrion" evidence="2">
    <location>
        <begin position="1"/>
        <end position="19"/>
    </location>
</feature>
<feature type="chain" id="PRO_0000409629" description="Genetic interactor of prohibitins 3, mitochondrial">
    <location>
        <begin position="20"/>
        <end position="629"/>
    </location>
</feature>
<feature type="domain" description="CP-type G" evidence="3">
    <location>
        <begin position="171"/>
        <end position="374"/>
    </location>
</feature>
<feature type="region of interest" description="Disordered" evidence="4">
    <location>
        <begin position="104"/>
        <end position="138"/>
    </location>
</feature>
<feature type="compositionally biased region" description="Basic and acidic residues" evidence="4">
    <location>
        <begin position="122"/>
        <end position="132"/>
    </location>
</feature>
<protein>
    <recommendedName>
        <fullName>Genetic interactor of prohibitins 3, mitochondrial</fullName>
    </recommendedName>
    <alternativeName>
        <fullName>Found in mitochondrial proteome protein 38</fullName>
    </alternativeName>
</protein>
<gene>
    <name type="primary">GEP3</name>
    <name type="synonym">FMP48</name>
    <name type="ORF">CAWG_03061</name>
</gene>
<organism>
    <name type="scientific">Candida albicans (strain WO-1)</name>
    <name type="common">Yeast</name>
    <dbReference type="NCBI Taxonomy" id="294748"/>
    <lineage>
        <taxon>Eukaryota</taxon>
        <taxon>Fungi</taxon>
        <taxon>Dikarya</taxon>
        <taxon>Ascomycota</taxon>
        <taxon>Saccharomycotina</taxon>
        <taxon>Pichiomycetes</taxon>
        <taxon>Debaryomycetaceae</taxon>
        <taxon>Candida/Lodderomyces clade</taxon>
        <taxon>Candida</taxon>
    </lineage>
</organism>
<sequence>MFSRSILLRSVRKSLGRYYSSQAHPQTYIYNLLSDTKCRSCGIQLQDKFPDKPGYYRLPGQNDSNTDNKAKTSELNKKYEKILQNLDISDRNLLINNFSAPKQDDEKVTSVPSLQQITPVEADTRDTTKDQQTHSGHSLSCKRCNDVIYNSKTRSIYDPNRDNLNKSEFPIPKLQQVLSTIPVDAPLVYVFSANDFPMGINKDIFQYRPPQQIYFVMTKSDILIPKTNVAFYNNFKKFLQNYMFKKFNVPRENVFIASGKDRWKMTDLYHFIPNYSYIIGDTNCGKSTLVKSLLINHHVKHWKYEARQQRPDEKQSSSASLKNKDFKKLDRLIDSFSSKNGPGTSHIPGFTRDVLPVDIDGIKELFDVPGFTTNENLQDIFDKLNHKQIARITKGANTSKYGSLKSKFDTVKNGQVLSLNGVGYLQFPGQDSMYQIRNVTKFALHKFKNLEKVDSILQRNEIPKSMSSHFIVNRQQQQQQRNELRGYYKRYIIPPFYGTIDLVIKDIGYINIKPTGKKLTNELMVLYLHPSLEAIIRQPILNYIDPPTPKKSPDGTNRKTITSDISKTPFYSRLIPSTVLSDPSSLVLSPPSSDYNQLNQYLQIDESSESAYNDLLELDETNKYDYWIE</sequence>
<proteinExistence type="inferred from homology"/>